<comment type="induction">
    <text>In stationary phase.</text>
</comment>
<comment type="similarity">
    <text evidence="2">Belongs to the metallo-dependent hydrolases superfamily. ATZ/TRZ family.</text>
</comment>
<comment type="sequence caution" evidence="2">
    <conflict type="erroneous initiation">
        <sequence resource="EMBL-CDS" id="AAA83060"/>
    </conflict>
    <text>Extended N-terminus.</text>
</comment>
<name>SSNA_ECOLI</name>
<protein>
    <recommendedName>
        <fullName>Putative aminohydrolase SsnA</fullName>
        <ecNumber>3.-.-.-</ecNumber>
    </recommendedName>
</protein>
<feature type="chain" id="PRO_0000122303" description="Putative aminohydrolase SsnA">
    <location>
        <begin position="1"/>
        <end position="442"/>
    </location>
</feature>
<feature type="binding site" evidence="1">
    <location>
        <position position="62"/>
    </location>
    <ligand>
        <name>Zn(2+)</name>
        <dbReference type="ChEBI" id="CHEBI:29105"/>
    </ligand>
</feature>
<feature type="binding site" evidence="1">
    <location>
        <position position="64"/>
    </location>
    <ligand>
        <name>Zn(2+)</name>
        <dbReference type="ChEBI" id="CHEBI:29105"/>
    </ligand>
</feature>
<feature type="binding site" evidence="1">
    <location>
        <position position="227"/>
    </location>
    <ligand>
        <name>Zn(2+)</name>
        <dbReference type="ChEBI" id="CHEBI:29105"/>
    </ligand>
</feature>
<feature type="binding site" evidence="1">
    <location>
        <position position="312"/>
    </location>
    <ligand>
        <name>Zn(2+)</name>
        <dbReference type="ChEBI" id="CHEBI:29105"/>
    </ligand>
</feature>
<keyword id="KW-0903">Direct protein sequencing</keyword>
<keyword id="KW-0378">Hydrolase</keyword>
<keyword id="KW-0479">Metal-binding</keyword>
<keyword id="KW-1185">Reference proteome</keyword>
<keyword id="KW-0862">Zinc</keyword>
<reference key="1">
    <citation type="journal article" date="1994" name="Biosci. Biotechnol. Biochem.">
        <title>Analysis of products of the Escherichia coli genomic genes and regulation of their expressions: an applicable procedure for genomic analysis of other microorganisms.</title>
        <authorList>
            <person name="Talukder A.A."/>
            <person name="Yanai S."/>
            <person name="Yamada M."/>
        </authorList>
    </citation>
    <scope>NUCLEOTIDE SEQUENCE [GENOMIC DNA]</scope>
    <source>
        <strain>K12</strain>
    </source>
</reference>
<reference key="2">
    <citation type="journal article" date="1997" name="Science">
        <title>The complete genome sequence of Escherichia coli K-12.</title>
        <authorList>
            <person name="Blattner F.R."/>
            <person name="Plunkett G. III"/>
            <person name="Bloch C.A."/>
            <person name="Perna N.T."/>
            <person name="Burland V."/>
            <person name="Riley M."/>
            <person name="Collado-Vides J."/>
            <person name="Glasner J.D."/>
            <person name="Rode C.K."/>
            <person name="Mayhew G.F."/>
            <person name="Gregor J."/>
            <person name="Davis N.W."/>
            <person name="Kirkpatrick H.A."/>
            <person name="Goeden M.A."/>
            <person name="Rose D.J."/>
            <person name="Mau B."/>
            <person name="Shao Y."/>
        </authorList>
    </citation>
    <scope>NUCLEOTIDE SEQUENCE [LARGE SCALE GENOMIC DNA]</scope>
    <source>
        <strain>K12 / MG1655 / ATCC 47076</strain>
    </source>
</reference>
<reference key="3">
    <citation type="journal article" date="2006" name="Mol. Syst. Biol.">
        <title>Highly accurate genome sequences of Escherichia coli K-12 strains MG1655 and W3110.</title>
        <authorList>
            <person name="Hayashi K."/>
            <person name="Morooka N."/>
            <person name="Yamamoto Y."/>
            <person name="Fujita K."/>
            <person name="Isono K."/>
            <person name="Choi S."/>
            <person name="Ohtsubo E."/>
            <person name="Baba T."/>
            <person name="Wanner B.L."/>
            <person name="Mori H."/>
            <person name="Horiuchi T."/>
        </authorList>
    </citation>
    <scope>NUCLEOTIDE SEQUENCE [LARGE SCALE GENOMIC DNA]</scope>
    <source>
        <strain>K12 / W3110 / ATCC 27325 / DSM 5911</strain>
    </source>
</reference>
<reference key="4">
    <citation type="journal article" date="1999" name="J. Bacteriol.">
        <title>Characterization of the ssnA gene, which is involved in the decline of cell viability at the beginning of stationary phase in Escherichia coli.</title>
        <authorList>
            <person name="Yamada M."/>
            <person name="Talukder A.A."/>
            <person name="Nitta T."/>
        </authorList>
    </citation>
    <scope>PROTEIN SEQUENCE OF 1-9</scope>
</reference>
<accession>Q46812</accession>
<accession>Q2M9W1</accession>
<accession>Q47560</accession>
<evidence type="ECO:0000255" key="1"/>
<evidence type="ECO:0000305" key="2"/>
<gene>
    <name type="primary">ssnA</name>
    <name type="synonym">ygfL</name>
    <name type="ordered locus">b2879</name>
    <name type="ordered locus">JW2847</name>
</gene>
<dbReference type="EC" id="3.-.-.-"/>
<dbReference type="EMBL" id="U28375">
    <property type="protein sequence ID" value="AAA83060.1"/>
    <property type="status" value="ALT_INIT"/>
    <property type="molecule type" value="Genomic_DNA"/>
</dbReference>
<dbReference type="EMBL" id="U00096">
    <property type="protein sequence ID" value="AAC75917.2"/>
    <property type="molecule type" value="Genomic_DNA"/>
</dbReference>
<dbReference type="EMBL" id="AP009048">
    <property type="protein sequence ID" value="BAE76945.1"/>
    <property type="molecule type" value="Genomic_DNA"/>
</dbReference>
<dbReference type="EMBL" id="D21141">
    <property type="protein sequence ID" value="BAA04677.1"/>
    <property type="molecule type" value="Genomic_DNA"/>
</dbReference>
<dbReference type="PIR" id="G65071">
    <property type="entry name" value="G65071"/>
</dbReference>
<dbReference type="RefSeq" id="NP_417355.4">
    <property type="nucleotide sequence ID" value="NC_000913.3"/>
</dbReference>
<dbReference type="RefSeq" id="WP_000906252.1">
    <property type="nucleotide sequence ID" value="NZ_LN832404.1"/>
</dbReference>
<dbReference type="SMR" id="Q46812"/>
<dbReference type="BioGRID" id="4262326">
    <property type="interactions" value="73"/>
</dbReference>
<dbReference type="DIP" id="DIP-10923N"/>
<dbReference type="FunCoup" id="Q46812">
    <property type="interactions" value="85"/>
</dbReference>
<dbReference type="IntAct" id="Q46812">
    <property type="interactions" value="4"/>
</dbReference>
<dbReference type="STRING" id="511145.b2879"/>
<dbReference type="jPOST" id="Q46812"/>
<dbReference type="PaxDb" id="511145-b2879"/>
<dbReference type="DNASU" id="949072"/>
<dbReference type="EnsemblBacteria" id="AAC75917">
    <property type="protein sequence ID" value="AAC75917"/>
    <property type="gene ID" value="b2879"/>
</dbReference>
<dbReference type="GeneID" id="949072"/>
<dbReference type="KEGG" id="ecj:JW2847"/>
<dbReference type="KEGG" id="eco:b2879"/>
<dbReference type="KEGG" id="ecoc:C3026_15790"/>
<dbReference type="PATRIC" id="fig|1411691.4.peg.3855"/>
<dbReference type="EchoBASE" id="EB2874"/>
<dbReference type="eggNOG" id="COG0402">
    <property type="taxonomic scope" value="Bacteria"/>
</dbReference>
<dbReference type="HOGENOM" id="CLU_012358_2_6_6"/>
<dbReference type="InParanoid" id="Q46812"/>
<dbReference type="OMA" id="CLCYEVS"/>
<dbReference type="OrthoDB" id="9807210at2"/>
<dbReference type="PhylomeDB" id="Q46812"/>
<dbReference type="BioCyc" id="EcoCyc:G7498-MONOMER"/>
<dbReference type="PRO" id="PR:Q46812"/>
<dbReference type="Proteomes" id="UP000000625">
    <property type="component" value="Chromosome"/>
</dbReference>
<dbReference type="GO" id="GO:0016810">
    <property type="term" value="F:hydrolase activity, acting on carbon-nitrogen (but not peptide) bonds"/>
    <property type="evidence" value="ECO:0007669"/>
    <property type="project" value="InterPro"/>
</dbReference>
<dbReference type="GO" id="GO:0046872">
    <property type="term" value="F:metal ion binding"/>
    <property type="evidence" value="ECO:0007669"/>
    <property type="project" value="UniProtKB-KW"/>
</dbReference>
<dbReference type="GO" id="GO:0030308">
    <property type="term" value="P:negative regulation of cell growth"/>
    <property type="evidence" value="ECO:0000315"/>
    <property type="project" value="CACAO"/>
</dbReference>
<dbReference type="CDD" id="cd01298">
    <property type="entry name" value="ATZ_TRZ_like"/>
    <property type="match status" value="1"/>
</dbReference>
<dbReference type="Gene3D" id="3.20.20.140">
    <property type="entry name" value="Metal-dependent hydrolases"/>
    <property type="match status" value="1"/>
</dbReference>
<dbReference type="Gene3D" id="2.30.40.10">
    <property type="entry name" value="Urease, subunit C, domain 1"/>
    <property type="match status" value="1"/>
</dbReference>
<dbReference type="InterPro" id="IPR006680">
    <property type="entry name" value="Amidohydro-rel"/>
</dbReference>
<dbReference type="InterPro" id="IPR017700">
    <property type="entry name" value="Aminohydrolase_SsnA"/>
</dbReference>
<dbReference type="InterPro" id="IPR011059">
    <property type="entry name" value="Metal-dep_hydrolase_composite"/>
</dbReference>
<dbReference type="InterPro" id="IPR032466">
    <property type="entry name" value="Metal_Hydrolase"/>
</dbReference>
<dbReference type="InterPro" id="IPR050287">
    <property type="entry name" value="MTA/SAH_deaminase"/>
</dbReference>
<dbReference type="NCBIfam" id="NF005540">
    <property type="entry name" value="PRK07203.1"/>
    <property type="match status" value="1"/>
</dbReference>
<dbReference type="NCBIfam" id="TIGR03314">
    <property type="entry name" value="Se_ssnA"/>
    <property type="match status" value="1"/>
</dbReference>
<dbReference type="PANTHER" id="PTHR43794:SF11">
    <property type="entry name" value="AMIDOHYDROLASE-RELATED DOMAIN-CONTAINING PROTEIN"/>
    <property type="match status" value="1"/>
</dbReference>
<dbReference type="PANTHER" id="PTHR43794">
    <property type="entry name" value="AMINOHYDROLASE SSNA-RELATED"/>
    <property type="match status" value="1"/>
</dbReference>
<dbReference type="Pfam" id="PF01979">
    <property type="entry name" value="Amidohydro_1"/>
    <property type="match status" value="1"/>
</dbReference>
<dbReference type="SUPFAM" id="SSF51338">
    <property type="entry name" value="Composite domain of metallo-dependent hydrolases"/>
    <property type="match status" value="1"/>
</dbReference>
<dbReference type="SUPFAM" id="SSF51556">
    <property type="entry name" value="Metallo-dependent hydrolases"/>
    <property type="match status" value="1"/>
</dbReference>
<sequence length="442" mass="48842">MLILKNVTAVQLHPAKVQEGVDIAIENDVIVAIGDALTQRYPDASFKEMHGRIVMPGIVCSHNHFYSGLSRGIMANIAPCPDFISTLKNLWWRLDRALDEESLYYSGLICSLEAIKSGCTSVIDHHASPAYIGGSLSTLRDAFLKVGLRAMTCFETTDRNNGIKELQEGVEENIRFARLIDEAKKATSEPYLVEAHIGAHAPFTVPDAGLEMLREAVKATGRGLHIHAAEDLYDVSYSHHWYGKDLLARLAQFDLIDSKTLVAHGLYLSKDDITLLNQRDAFLVHNARSNMNNHVGYNHHLSDIRNLALGTDGIGSDMFEEMKFAFFKHRDAGGPLWPDSFAKALTNGNELMSRNFGAKFGLLEAGYKADLTICDYNSPTPLLADNIAGHIAFGMGSGSVHSVMVNGVMVYEDRQFNFDCDSIYAQARKAAASMWRRMDALA</sequence>
<proteinExistence type="evidence at protein level"/>
<organism>
    <name type="scientific">Escherichia coli (strain K12)</name>
    <dbReference type="NCBI Taxonomy" id="83333"/>
    <lineage>
        <taxon>Bacteria</taxon>
        <taxon>Pseudomonadati</taxon>
        <taxon>Pseudomonadota</taxon>
        <taxon>Gammaproteobacteria</taxon>
        <taxon>Enterobacterales</taxon>
        <taxon>Enterobacteriaceae</taxon>
        <taxon>Escherichia</taxon>
    </lineage>
</organism>